<accession>O74870</accession>
<evidence type="ECO:0000255" key="1"/>
<evidence type="ECO:0000269" key="2">
    <source>
    </source>
</evidence>
<evidence type="ECO:0000305" key="3"/>
<sequence>MNAKLSSSGMVLKELPEVALQKISSNYYWAVFAVFLLCAIVFPLVSIFSLPQKQTYHRFFSILSLVSCLAYFTMACNYGLKNVFSSASFFREVSVRMVYYVRYIQWLINFPLIIVMLHWTVGVSILEIAYVVCYVLFAIVCLLAAALTSSPYKWAYYGFSFVGYFIALAHSVVLHKKYASRLETSARLGFLWSIVYLHVIWFLYYACWILSEGLNVISPIGEAIFYSILDLFEFGFFGAAFSWMLDLVGIENFKSPQSIPLGACSPADDKFSMCPDMEAQNQADDLAVETRIQISNLPSSPTKNNC</sequence>
<organism>
    <name type="scientific">Schizosaccharomyces pombe (strain 972 / ATCC 24843)</name>
    <name type="common">Fission yeast</name>
    <dbReference type="NCBI Taxonomy" id="284812"/>
    <lineage>
        <taxon>Eukaryota</taxon>
        <taxon>Fungi</taxon>
        <taxon>Dikarya</taxon>
        <taxon>Ascomycota</taxon>
        <taxon>Taphrinomycotina</taxon>
        <taxon>Schizosaccharomycetes</taxon>
        <taxon>Schizosaccharomycetales</taxon>
        <taxon>Schizosaccharomycetaceae</taxon>
        <taxon>Schizosaccharomyces</taxon>
    </lineage>
</organism>
<reference key="1">
    <citation type="journal article" date="2002" name="Nature">
        <title>The genome sequence of Schizosaccharomyces pombe.</title>
        <authorList>
            <person name="Wood V."/>
            <person name="Gwilliam R."/>
            <person name="Rajandream M.A."/>
            <person name="Lyne M.H."/>
            <person name="Lyne R."/>
            <person name="Stewart A."/>
            <person name="Sgouros J.G."/>
            <person name="Peat N."/>
            <person name="Hayles J."/>
            <person name="Baker S.G."/>
            <person name="Basham D."/>
            <person name="Bowman S."/>
            <person name="Brooks K."/>
            <person name="Brown D."/>
            <person name="Brown S."/>
            <person name="Chillingworth T."/>
            <person name="Churcher C.M."/>
            <person name="Collins M."/>
            <person name="Connor R."/>
            <person name="Cronin A."/>
            <person name="Davis P."/>
            <person name="Feltwell T."/>
            <person name="Fraser A."/>
            <person name="Gentles S."/>
            <person name="Goble A."/>
            <person name="Hamlin N."/>
            <person name="Harris D.E."/>
            <person name="Hidalgo J."/>
            <person name="Hodgson G."/>
            <person name="Holroyd S."/>
            <person name="Hornsby T."/>
            <person name="Howarth S."/>
            <person name="Huckle E.J."/>
            <person name="Hunt S."/>
            <person name="Jagels K."/>
            <person name="James K.D."/>
            <person name="Jones L."/>
            <person name="Jones M."/>
            <person name="Leather S."/>
            <person name="McDonald S."/>
            <person name="McLean J."/>
            <person name="Mooney P."/>
            <person name="Moule S."/>
            <person name="Mungall K.L."/>
            <person name="Murphy L.D."/>
            <person name="Niblett D."/>
            <person name="Odell C."/>
            <person name="Oliver K."/>
            <person name="O'Neil S."/>
            <person name="Pearson D."/>
            <person name="Quail M.A."/>
            <person name="Rabbinowitsch E."/>
            <person name="Rutherford K.M."/>
            <person name="Rutter S."/>
            <person name="Saunders D."/>
            <person name="Seeger K."/>
            <person name="Sharp S."/>
            <person name="Skelton J."/>
            <person name="Simmonds M.N."/>
            <person name="Squares R."/>
            <person name="Squares S."/>
            <person name="Stevens K."/>
            <person name="Taylor K."/>
            <person name="Taylor R.G."/>
            <person name="Tivey A."/>
            <person name="Walsh S.V."/>
            <person name="Warren T."/>
            <person name="Whitehead S."/>
            <person name="Woodward J.R."/>
            <person name="Volckaert G."/>
            <person name="Aert R."/>
            <person name="Robben J."/>
            <person name="Grymonprez B."/>
            <person name="Weltjens I."/>
            <person name="Vanstreels E."/>
            <person name="Rieger M."/>
            <person name="Schaefer M."/>
            <person name="Mueller-Auer S."/>
            <person name="Gabel C."/>
            <person name="Fuchs M."/>
            <person name="Duesterhoeft A."/>
            <person name="Fritzc C."/>
            <person name="Holzer E."/>
            <person name="Moestl D."/>
            <person name="Hilbert H."/>
            <person name="Borzym K."/>
            <person name="Langer I."/>
            <person name="Beck A."/>
            <person name="Lehrach H."/>
            <person name="Reinhardt R."/>
            <person name="Pohl T.M."/>
            <person name="Eger P."/>
            <person name="Zimmermann W."/>
            <person name="Wedler H."/>
            <person name="Wambutt R."/>
            <person name="Purnelle B."/>
            <person name="Goffeau A."/>
            <person name="Cadieu E."/>
            <person name="Dreano S."/>
            <person name="Gloux S."/>
            <person name="Lelaure V."/>
            <person name="Mottier S."/>
            <person name="Galibert F."/>
            <person name="Aves S.J."/>
            <person name="Xiang Z."/>
            <person name="Hunt C."/>
            <person name="Moore K."/>
            <person name="Hurst S.M."/>
            <person name="Lucas M."/>
            <person name="Rochet M."/>
            <person name="Gaillardin C."/>
            <person name="Tallada V.A."/>
            <person name="Garzon A."/>
            <person name="Thode G."/>
            <person name="Daga R.R."/>
            <person name="Cruzado L."/>
            <person name="Jimenez J."/>
            <person name="Sanchez M."/>
            <person name="del Rey F."/>
            <person name="Benito J."/>
            <person name="Dominguez A."/>
            <person name="Revuelta J.L."/>
            <person name="Moreno S."/>
            <person name="Armstrong J."/>
            <person name="Forsburg S.L."/>
            <person name="Cerutti L."/>
            <person name="Lowe T."/>
            <person name="McCombie W.R."/>
            <person name="Paulsen I."/>
            <person name="Potashkin J."/>
            <person name="Shpakovski G.V."/>
            <person name="Ussery D."/>
            <person name="Barrell B.G."/>
            <person name="Nurse P."/>
        </authorList>
    </citation>
    <scope>NUCLEOTIDE SEQUENCE [LARGE SCALE GENOMIC DNA]</scope>
    <source>
        <strain>972 / ATCC 24843</strain>
    </source>
</reference>
<reference key="2">
    <citation type="journal article" date="2005" name="Curr. Biol.">
        <title>A large-scale screen in S. pombe identifies seven novel genes required for critical meiotic events.</title>
        <authorList>
            <person name="Martin-Castellanos C."/>
            <person name="Blanco M."/>
            <person name="Rozalen A.E."/>
            <person name="Perez-Hidalgo L."/>
            <person name="Garcia A.I."/>
            <person name="Conde F."/>
            <person name="Mata J."/>
            <person name="Ellermeier C."/>
            <person name="Davis L."/>
            <person name="San-Segundo P."/>
            <person name="Smith G.R."/>
            <person name="Moreno S."/>
        </authorList>
    </citation>
    <scope>FUNCTION IN MEIOSIS</scope>
</reference>
<keyword id="KW-0469">Meiosis</keyword>
<keyword id="KW-0472">Membrane</keyword>
<keyword id="KW-1185">Reference proteome</keyword>
<keyword id="KW-0812">Transmembrane</keyword>
<keyword id="KW-1133">Transmembrane helix</keyword>
<proteinExistence type="evidence at protein level"/>
<name>MUG73_SCHPO</name>
<dbReference type="EMBL" id="CU329672">
    <property type="protein sequence ID" value="CAA21219.1"/>
    <property type="molecule type" value="Genomic_DNA"/>
</dbReference>
<dbReference type="PIR" id="T41290">
    <property type="entry name" value="T41290"/>
</dbReference>
<dbReference type="RefSeq" id="NP_587895.1">
    <property type="nucleotide sequence ID" value="NM_001022887.2"/>
</dbReference>
<dbReference type="SMR" id="O74870"/>
<dbReference type="BioGRID" id="275314">
    <property type="interactions" value="39"/>
</dbReference>
<dbReference type="FunCoup" id="O74870">
    <property type="interactions" value="101"/>
</dbReference>
<dbReference type="STRING" id="284812.O74870"/>
<dbReference type="iPTMnet" id="O74870"/>
<dbReference type="SwissPalm" id="O74870"/>
<dbReference type="PaxDb" id="4896-SPCC31H12.02c.1"/>
<dbReference type="EnsemblFungi" id="SPCC31H12.02c.1">
    <property type="protein sequence ID" value="SPCC31H12.02c.1:pep"/>
    <property type="gene ID" value="SPCC31H12.02c"/>
</dbReference>
<dbReference type="GeneID" id="2538730"/>
<dbReference type="KEGG" id="spo:2538730"/>
<dbReference type="PomBase" id="SPCC31H12.02c">
    <property type="gene designation" value="mug73"/>
</dbReference>
<dbReference type="VEuPathDB" id="FungiDB:SPCC31H12.02c"/>
<dbReference type="eggNOG" id="ENOG502RWTP">
    <property type="taxonomic scope" value="Eukaryota"/>
</dbReference>
<dbReference type="HOGENOM" id="CLU_054785_4_0_1"/>
<dbReference type="InParanoid" id="O74870"/>
<dbReference type="OMA" id="MPWPTIL"/>
<dbReference type="PhylomeDB" id="O74870"/>
<dbReference type="PRO" id="PR:O74870"/>
<dbReference type="Proteomes" id="UP000002485">
    <property type="component" value="Chromosome III"/>
</dbReference>
<dbReference type="GO" id="GO:0005886">
    <property type="term" value="C:plasma membrane"/>
    <property type="evidence" value="ECO:0000318"/>
    <property type="project" value="GO_Central"/>
</dbReference>
<dbReference type="GO" id="GO:0051321">
    <property type="term" value="P:meiotic cell cycle"/>
    <property type="evidence" value="ECO:0007669"/>
    <property type="project" value="UniProtKB-KW"/>
</dbReference>
<dbReference type="CDD" id="cd15239">
    <property type="entry name" value="7tm_YRO2_fungal-like"/>
    <property type="match status" value="1"/>
</dbReference>
<dbReference type="Gene3D" id="1.20.1070.10">
    <property type="entry name" value="Rhodopsin 7-helix transmembrane proteins"/>
    <property type="match status" value="1"/>
</dbReference>
<dbReference type="InterPro" id="IPR001425">
    <property type="entry name" value="Arc/bac/fun_rhodopsins"/>
</dbReference>
<dbReference type="InterPro" id="IPR043476">
    <property type="entry name" value="Yro2-like_7TM"/>
</dbReference>
<dbReference type="PANTHER" id="PTHR28286">
    <property type="match status" value="1"/>
</dbReference>
<dbReference type="PANTHER" id="PTHR28286:SF1">
    <property type="entry name" value="30 KDA HEAT SHOCK PROTEIN-RELATED"/>
    <property type="match status" value="1"/>
</dbReference>
<dbReference type="Pfam" id="PF01036">
    <property type="entry name" value="Bac_rhodopsin"/>
    <property type="match status" value="1"/>
</dbReference>
<dbReference type="PRINTS" id="PR00251">
    <property type="entry name" value="BACTRLOPSIN"/>
</dbReference>
<dbReference type="SMART" id="SM01021">
    <property type="entry name" value="Bac_rhodopsin"/>
    <property type="match status" value="1"/>
</dbReference>
<dbReference type="SUPFAM" id="SSF81321">
    <property type="entry name" value="Family A G protein-coupled receptor-like"/>
    <property type="match status" value="1"/>
</dbReference>
<feature type="chain" id="PRO_0000278563" description="Meiotically up-regulated gene 73 protein">
    <location>
        <begin position="1"/>
        <end position="306"/>
    </location>
</feature>
<feature type="transmembrane region" description="Helical" evidence="1">
    <location>
        <begin position="28"/>
        <end position="48"/>
    </location>
</feature>
<feature type="transmembrane region" description="Helical" evidence="1">
    <location>
        <begin position="59"/>
        <end position="79"/>
    </location>
</feature>
<feature type="transmembrane region" description="Helical" evidence="1">
    <location>
        <begin position="103"/>
        <end position="123"/>
    </location>
</feature>
<feature type="transmembrane region" description="Helical" evidence="1">
    <location>
        <begin position="125"/>
        <end position="145"/>
    </location>
</feature>
<feature type="transmembrane region" description="Helical" evidence="1">
    <location>
        <begin position="154"/>
        <end position="174"/>
    </location>
</feature>
<feature type="transmembrane region" description="Helical" evidence="1">
    <location>
        <begin position="190"/>
        <end position="210"/>
    </location>
</feature>
<feature type="transmembrane region" description="Helical" evidence="1">
    <location>
        <begin position="224"/>
        <end position="244"/>
    </location>
</feature>
<protein>
    <recommendedName>
        <fullName>Meiotically up-regulated gene 73 protein</fullName>
    </recommendedName>
</protein>
<comment type="function">
    <text evidence="2">Has a role in meiosis.</text>
</comment>
<comment type="subcellular location">
    <subcellularLocation>
        <location evidence="3">Membrane</location>
        <topology evidence="3">Multi-pass membrane protein</topology>
    </subcellularLocation>
</comment>
<comment type="similarity">
    <text evidence="3">Belongs to the archaeal/bacterial/fungal opsin family.</text>
</comment>
<gene>
    <name type="primary">mug73</name>
    <name type="ORF">SPCC31H12.02c</name>
</gene>